<name>HEXNO_RALSU</name>
<comment type="function">
    <text evidence="3">Catalyzes the oxidation of a range of monosaccharides in vitro, displaying the highest activity with N-acetylglucosamine (GlcNAc) and N-acetylgalactosamine (GalNAc), with a reduction of O2 to H2O2. Acts upon the C1 carbon of the GlcNAc or GalNAc molecule, producing the corresponding lactone, which can spontaneously hydrolyze. Its biological function is unclear, but its main function might be connected to extracellular production of hydrogen peroxide to compete with other organisms through oxidative stress, or support the action of peroxidases and peroxygenases.</text>
</comment>
<comment type="catalytic activity">
    <reaction evidence="3">
        <text>N-acetyl-D-glucosamine + O2 + H2O = N-acetyl-D-glucosaminate + H2O2 + H(+)</text>
        <dbReference type="Rhea" id="RHEA:13029"/>
        <dbReference type="ChEBI" id="CHEBI:15377"/>
        <dbReference type="ChEBI" id="CHEBI:15378"/>
        <dbReference type="ChEBI" id="CHEBI:15379"/>
        <dbReference type="ChEBI" id="CHEBI:16240"/>
        <dbReference type="ChEBI" id="CHEBI:38439"/>
        <dbReference type="ChEBI" id="CHEBI:506227"/>
        <dbReference type="EC" id="1.1.3.29"/>
    </reaction>
</comment>
<comment type="catalytic activity">
    <reaction evidence="3">
        <text>N-acetyl-D-galactosamine + O2 + H2O = N-acetyl-D-galactosaminate + H2O2 + H(+)</text>
        <dbReference type="Rhea" id="RHEA:69512"/>
        <dbReference type="ChEBI" id="CHEBI:15377"/>
        <dbReference type="ChEBI" id="CHEBI:15378"/>
        <dbReference type="ChEBI" id="CHEBI:15379"/>
        <dbReference type="ChEBI" id="CHEBI:16240"/>
        <dbReference type="ChEBI" id="CHEBI:28037"/>
        <dbReference type="ChEBI" id="CHEBI:28655"/>
        <dbReference type="EC" id="1.1.3.29"/>
    </reaction>
</comment>
<comment type="catalytic activity">
    <reaction evidence="3">
        <text>N-acetyl-D-glucosamine + O2 = N-acetyl-D-glucosamino-1,5-lactone + H2O2</text>
        <dbReference type="Rhea" id="RHEA:69504"/>
        <dbReference type="ChEBI" id="CHEBI:15379"/>
        <dbReference type="ChEBI" id="CHEBI:16240"/>
        <dbReference type="ChEBI" id="CHEBI:42870"/>
        <dbReference type="ChEBI" id="CHEBI:506227"/>
    </reaction>
</comment>
<comment type="catalytic activity">
    <reaction evidence="3">
        <text>N-acetyl-D-galactosamine + O2 = N-acetyl-D-galactosamino-1,5-lactone + H2O2</text>
        <dbReference type="Rhea" id="RHEA:69516"/>
        <dbReference type="ChEBI" id="CHEBI:15379"/>
        <dbReference type="ChEBI" id="CHEBI:16240"/>
        <dbReference type="ChEBI" id="CHEBI:28037"/>
        <dbReference type="ChEBI" id="CHEBI:184299"/>
    </reaction>
</comment>
<comment type="cofactor">
    <cofactor evidence="3">
        <name>FAD</name>
        <dbReference type="ChEBI" id="CHEBI:57692"/>
    </cofactor>
    <text evidence="1">Binds 1 FAD per subunit in a bicovalent manner.</text>
</comment>
<comment type="biophysicochemical properties">
    <kinetics>
        <KM evidence="3">0.26 mM for N-acetyl-D-glucosamine</KM>
        <KM evidence="3">0.32 mM for N-acetyl-D-galactosamine</KM>
        <KM evidence="3">182 mM for N-acetyl-D-mannosamine</KM>
        <KM evidence="3">18.7 mM for diacetylchitobiose</KM>
        <KM evidence="3">4.54 mM for D-glucosamine</KM>
        <KM evidence="3">1.35 mM for D-galactosamine</KM>
        <KM evidence="3">65.7 mM for D-mannosamine</KM>
        <KM evidence="3">216 mM for D-glucose</KM>
        <KM evidence="3">102 mM for D-galactose</KM>
        <KM evidence="3">118 mM for D-mannose</KM>
        <text evidence="3">kcat is 5.67 sec(-1) with N-acetyl-D-glucosamine as substrate. kcat is 4.46 sec(-1) with N-acetyl-D-glucosamine as substrate. kcat is 2.23 sec(-1) with N-acetyl-D-mannosamine as substrate. kcat is 0.84 sec(-1) with diacetylchitobiose as substrate. kcat is 0.35 sec(-1) with D-glucosamine as substrate. kcat is 0.62 sec(-1) with D-galactosamine as substrate. kcat is 0.011 sec(-1) with D-mannosamine as substrate. kcat is 0.16 sec(-1) with D-glucose as substrate. kcat is 0.19 sec(-1) with D-galactose as substrate. kcat is 0.14 sec(-1) with D-mannose as substrate.</text>
    </kinetics>
    <phDependence>
        <text evidence="3">Optimum pH is 7.5.</text>
    </phDependence>
</comment>
<comment type="similarity">
    <text evidence="5">Belongs to the oxygen-dependent FAD-linked oxidoreductase family.</text>
</comment>
<keyword id="KW-0002">3D-structure</keyword>
<keyword id="KW-0274">FAD</keyword>
<keyword id="KW-0285">Flavoprotein</keyword>
<keyword id="KW-0560">Oxidoreductase</keyword>
<keyword id="KW-0883">Thioether bond</keyword>
<gene>
    <name evidence="6" type="ORF">RRSL_02030</name>
</gene>
<accession>A3RXB7</accession>
<dbReference type="EC" id="1.1.3.29" evidence="3"/>
<dbReference type="EMBL" id="AAKL01000041">
    <property type="protein sequence ID" value="EAP71857.1"/>
    <property type="molecule type" value="Genomic_DNA"/>
</dbReference>
<dbReference type="RefSeq" id="WP_003264718.1">
    <property type="nucleotide sequence ID" value="NZ_AAKL01000041.1"/>
</dbReference>
<dbReference type="PDB" id="7ZZK">
    <property type="method" value="X-ray"/>
    <property type="resolution" value="1.50 A"/>
    <property type="chains" value="A/B=1-508"/>
</dbReference>
<dbReference type="PDBsum" id="7ZZK"/>
<dbReference type="SMR" id="A3RXB7"/>
<dbReference type="PATRIC" id="fig|342110.8.peg.2091"/>
<dbReference type="STRENDA-DB" id="QV0MJR">
    <property type="experiment" value="Characterisation of D-lactate dehydrogenase"/>
</dbReference>
<dbReference type="Proteomes" id="UP000005933">
    <property type="component" value="Unassembled WGS sequence"/>
</dbReference>
<dbReference type="GO" id="GO:0071949">
    <property type="term" value="F:FAD binding"/>
    <property type="evidence" value="ECO:0007669"/>
    <property type="project" value="InterPro"/>
</dbReference>
<dbReference type="GO" id="GO:0016491">
    <property type="term" value="F:oxidoreductase activity"/>
    <property type="evidence" value="ECO:0007669"/>
    <property type="project" value="UniProtKB-KW"/>
</dbReference>
<dbReference type="Gene3D" id="3.30.465.10">
    <property type="match status" value="1"/>
</dbReference>
<dbReference type="Gene3D" id="3.40.462.20">
    <property type="match status" value="1"/>
</dbReference>
<dbReference type="InterPro" id="IPR012951">
    <property type="entry name" value="BBE"/>
</dbReference>
<dbReference type="InterPro" id="IPR016166">
    <property type="entry name" value="FAD-bd_PCMH"/>
</dbReference>
<dbReference type="InterPro" id="IPR036318">
    <property type="entry name" value="FAD-bd_PCMH-like_sf"/>
</dbReference>
<dbReference type="InterPro" id="IPR016169">
    <property type="entry name" value="FAD-bd_PCMH_sub2"/>
</dbReference>
<dbReference type="InterPro" id="IPR050416">
    <property type="entry name" value="FAD-linked_Oxidoreductase"/>
</dbReference>
<dbReference type="InterPro" id="IPR006094">
    <property type="entry name" value="Oxid_FAD_bind_N"/>
</dbReference>
<dbReference type="PANTHER" id="PTHR42973">
    <property type="entry name" value="BINDING OXIDOREDUCTASE, PUTATIVE (AFU_ORTHOLOGUE AFUA_1G17690)-RELATED"/>
    <property type="match status" value="1"/>
</dbReference>
<dbReference type="PANTHER" id="PTHR42973:SF39">
    <property type="entry name" value="FAD-BINDING PCMH-TYPE DOMAIN-CONTAINING PROTEIN"/>
    <property type="match status" value="1"/>
</dbReference>
<dbReference type="Pfam" id="PF08031">
    <property type="entry name" value="BBE"/>
    <property type="match status" value="1"/>
</dbReference>
<dbReference type="Pfam" id="PF01565">
    <property type="entry name" value="FAD_binding_4"/>
    <property type="match status" value="1"/>
</dbReference>
<dbReference type="SUPFAM" id="SSF56176">
    <property type="entry name" value="FAD-binding/transporter-associated domain-like"/>
    <property type="match status" value="1"/>
</dbReference>
<dbReference type="PROSITE" id="PS51387">
    <property type="entry name" value="FAD_PCMH"/>
    <property type="match status" value="1"/>
</dbReference>
<evidence type="ECO:0000250" key="1">
    <source>
        <dbReference type="UniProtKB" id="P93762"/>
    </source>
</evidence>
<evidence type="ECO:0000255" key="2">
    <source>
        <dbReference type="PROSITE-ProRule" id="PRU00718"/>
    </source>
</evidence>
<evidence type="ECO:0000269" key="3">
    <source>
    </source>
</evidence>
<evidence type="ECO:0000303" key="4">
    <source>
    </source>
</evidence>
<evidence type="ECO:0000305" key="5"/>
<evidence type="ECO:0000312" key="6">
    <source>
        <dbReference type="EMBL" id="EAP71857.1"/>
    </source>
</evidence>
<evidence type="ECO:0007829" key="7">
    <source>
        <dbReference type="PDB" id="7ZZK"/>
    </source>
</evidence>
<proteinExistence type="evidence at protein level"/>
<reference key="1">
    <citation type="journal article" date="2006" name="Mol. Plant Microbe Interact.">
        <title>Identification of open reading frames unique to a select agent: Ralstonia solanacearum race 3 biovar 2.</title>
        <authorList>
            <person name="Gabriel D.W."/>
            <person name="Allen C."/>
            <person name="Schell M."/>
            <person name="Denny T.P."/>
            <person name="Greenberg J.T."/>
            <person name="Duan Y.P."/>
            <person name="Flores-Cruz Z."/>
            <person name="Huang Q."/>
            <person name="Clifford J.M."/>
            <person name="Presting G."/>
            <person name="Gonzalez E.T."/>
            <person name="Reddy J."/>
            <person name="Elphinstone J."/>
            <person name="Swanson J."/>
            <person name="Yao J."/>
            <person name="Mulholland V."/>
            <person name="Liu L."/>
            <person name="Farmerie W."/>
            <person name="Patnaikuni M."/>
            <person name="Balogh B."/>
            <person name="Norman D."/>
            <person name="Alvarez A."/>
            <person name="Castillo J.A."/>
            <person name="Jones J."/>
            <person name="Saddler G."/>
            <person name="Walunas T."/>
            <person name="Zhukov A."/>
            <person name="Mikhailova N."/>
        </authorList>
    </citation>
    <scope>NUCLEOTIDE SEQUENCE [LARGE SCALE GENOMIC DNA]</scope>
    <source>
        <strain>UW551</strain>
    </source>
</reference>
<reference key="2">
    <citation type="journal article" date="2021" name="ChemBioChem">
        <title>Discovery of two novel oxidases using a high-throughput activity screen.</title>
        <authorList>
            <person name="Rembeza E."/>
            <person name="Boverio A."/>
            <person name="Fraaije M.W."/>
            <person name="Engqvist M."/>
        </authorList>
    </citation>
    <scope>FUNCTION</scope>
    <scope>CATALYTIC ACTIVITY</scope>
    <scope>BIOPHYSICOCHEMICAL PROPERTIES</scope>
    <scope>COFACTOR</scope>
    <scope>SUBSTRATE SPECIFICITY</scope>
    <scope>3D-STRUCTURE MODELING</scope>
</reference>
<protein>
    <recommendedName>
        <fullName evidence="4">N-acetyl-D-hexosamine oxidase</fullName>
        <shortName evidence="4">HexNAcO</shortName>
        <ecNumber evidence="3">1.1.3.29</ecNumber>
    </recommendedName>
</protein>
<organism>
    <name type="scientific">Ralstonia solanacearum (strain UW551)</name>
    <dbReference type="NCBI Taxonomy" id="342110"/>
    <lineage>
        <taxon>Bacteria</taxon>
        <taxon>Pseudomonadati</taxon>
        <taxon>Pseudomonadota</taxon>
        <taxon>Betaproteobacteria</taxon>
        <taxon>Burkholderiales</taxon>
        <taxon>Burkholderiaceae</taxon>
        <taxon>Ralstonia</taxon>
        <taxon>Ralstonia solanacearum species complex</taxon>
    </lineage>
</organism>
<feature type="chain" id="PRO_0000455049" description="N-acetyl-D-hexosamine oxidase">
    <location>
        <begin position="1"/>
        <end position="508"/>
    </location>
</feature>
<feature type="domain" description="FAD-binding PCMH-type" evidence="2">
    <location>
        <begin position="26"/>
        <end position="203"/>
    </location>
</feature>
<feature type="cross-link" description="6-(S-cysteinyl)-8alpha-(pros-histidyl)-FAD (His-Cys)" evidence="1">
    <location>
        <begin position="64"/>
        <end position="123"/>
    </location>
</feature>
<feature type="strand" evidence="7">
    <location>
        <begin position="3"/>
        <end position="6"/>
    </location>
</feature>
<feature type="helix" evidence="7">
    <location>
        <begin position="12"/>
        <end position="15"/>
    </location>
</feature>
<feature type="strand" evidence="7">
    <location>
        <begin position="24"/>
        <end position="26"/>
    </location>
</feature>
<feature type="helix" evidence="7">
    <location>
        <begin position="27"/>
        <end position="29"/>
    </location>
</feature>
<feature type="strand" evidence="7">
    <location>
        <begin position="32"/>
        <end position="36"/>
    </location>
</feature>
<feature type="helix" evidence="7">
    <location>
        <begin position="40"/>
        <end position="42"/>
    </location>
</feature>
<feature type="helix" evidence="7">
    <location>
        <begin position="43"/>
        <end position="52"/>
    </location>
</feature>
<feature type="strand" evidence="7">
    <location>
        <begin position="57"/>
        <end position="62"/>
    </location>
</feature>
<feature type="turn" evidence="7">
    <location>
        <begin position="68"/>
        <end position="71"/>
    </location>
</feature>
<feature type="strand" evidence="7">
    <location>
        <begin position="77"/>
        <end position="80"/>
    </location>
</feature>
<feature type="strand" evidence="7">
    <location>
        <begin position="95"/>
        <end position="98"/>
    </location>
</feature>
<feature type="helix" evidence="7">
    <location>
        <begin position="103"/>
        <end position="114"/>
    </location>
</feature>
<feature type="helix" evidence="7">
    <location>
        <begin position="128"/>
        <end position="133"/>
    </location>
</feature>
<feature type="helix" evidence="7">
    <location>
        <begin position="141"/>
        <end position="144"/>
    </location>
</feature>
<feature type="helix" evidence="7">
    <location>
        <begin position="147"/>
        <end position="150"/>
    </location>
</feature>
<feature type="strand" evidence="7">
    <location>
        <begin position="153"/>
        <end position="159"/>
    </location>
</feature>
<feature type="strand" evidence="7">
    <location>
        <begin position="165"/>
        <end position="175"/>
    </location>
</feature>
<feature type="helix" evidence="7">
    <location>
        <begin position="176"/>
        <end position="182"/>
    </location>
</feature>
<feature type="strand" evidence="7">
    <location>
        <begin position="187"/>
        <end position="199"/>
    </location>
</feature>
<feature type="strand" evidence="7">
    <location>
        <begin position="206"/>
        <end position="216"/>
    </location>
</feature>
<feature type="helix" evidence="7">
    <location>
        <begin position="217"/>
        <end position="219"/>
    </location>
</feature>
<feature type="helix" evidence="7">
    <location>
        <begin position="222"/>
        <end position="237"/>
    </location>
</feature>
<feature type="helix" evidence="7">
    <location>
        <begin position="239"/>
        <end position="241"/>
    </location>
</feature>
<feature type="helix" evidence="7">
    <location>
        <begin position="243"/>
        <end position="245"/>
    </location>
</feature>
<feature type="strand" evidence="7">
    <location>
        <begin position="248"/>
        <end position="255"/>
    </location>
</feature>
<feature type="helix" evidence="7">
    <location>
        <begin position="257"/>
        <end position="259"/>
    </location>
</feature>
<feature type="strand" evidence="7">
    <location>
        <begin position="260"/>
        <end position="268"/>
    </location>
</feature>
<feature type="helix" evidence="7">
    <location>
        <begin position="279"/>
        <end position="286"/>
    </location>
</feature>
<feature type="strand" evidence="7">
    <location>
        <begin position="321"/>
        <end position="326"/>
    </location>
</feature>
<feature type="helix" evidence="7">
    <location>
        <begin position="327"/>
        <end position="333"/>
    </location>
</feature>
<feature type="strand" evidence="7">
    <location>
        <begin position="340"/>
        <end position="352"/>
    </location>
</feature>
<feature type="helix" evidence="7">
    <location>
        <begin position="356"/>
        <end position="366"/>
    </location>
</feature>
<feature type="strand" evidence="7">
    <location>
        <begin position="379"/>
        <end position="384"/>
    </location>
</feature>
<feature type="helix" evidence="7">
    <location>
        <begin position="387"/>
        <end position="389"/>
    </location>
</feature>
<feature type="helix" evidence="7">
    <location>
        <begin position="393"/>
        <end position="397"/>
    </location>
</feature>
<feature type="strand" evidence="7">
    <location>
        <begin position="406"/>
        <end position="416"/>
    </location>
</feature>
<feature type="helix" evidence="7">
    <location>
        <begin position="418"/>
        <end position="420"/>
    </location>
</feature>
<feature type="helix" evidence="7">
    <location>
        <begin position="421"/>
        <end position="435"/>
    </location>
</feature>
<feature type="turn" evidence="7">
    <location>
        <begin position="438"/>
        <end position="440"/>
    </location>
</feature>
<feature type="helix" evidence="7">
    <location>
        <begin position="443"/>
        <end position="445"/>
    </location>
</feature>
<feature type="turn" evidence="7">
    <location>
        <begin position="452"/>
        <end position="454"/>
    </location>
</feature>
<feature type="helix" evidence="7">
    <location>
        <begin position="465"/>
        <end position="469"/>
    </location>
</feature>
<feature type="helix" evidence="7">
    <location>
        <begin position="473"/>
        <end position="478"/>
    </location>
</feature>
<feature type="strand" evidence="7">
    <location>
        <begin position="480"/>
        <end position="482"/>
    </location>
</feature>
<feature type="helix" evidence="7">
    <location>
        <begin position="483"/>
        <end position="494"/>
    </location>
</feature>
<sequence>MTLDVSRQDPRYNTLKHGFNLRWPSTDAQAAGRIALCEKADDVAPALQHIIDTGMRPTVRSGGHCYEDFVSNNPDGAIVDLSLLNAPEVRADGTVRIPAGTQNWNGYLELYKRHNLTLPGGSCYSVGAGGHICGGGYGLLSRLQGLTVDWLSAVDIVTVDRQGRAAPRTVDATRDPELFRACRGAGGGNFGIITAYTFARLPEAPREVALATVAFDWAAMTPERFAELLRLYGEYWETRGKDPDTWGMFSLLKLTHRSAGQIVMLTQFCNPDGTCRDLSVLNDFLARFRACAPVPLKGRPPGYGPAHRQGVGQLLCSKPHTVVRYDWLTATQTVNGSGPNQRGKYKSAYMKRGFTAREAQRIYTHLTRTVPGIDLSQSLLQVDSYGGAVNKTERIADTAVPQRASVMKLQYQTYWTSAADDAGHLRWIGDFYRDVYGTPDVSAPHAGTPYPGDRYEGCYINYPDVDMLAYPFWPQLYYGDGDLYAFLQRVKRRYDPNNIFHHAMSVRP</sequence>